<reference key="1">
    <citation type="submission" date="2007-09" db="EMBL/GenBank/DDBJ databases">
        <title>Complete genome sequence of Rickettsia rickettsii.</title>
        <authorList>
            <person name="Madan A."/>
            <person name="Fahey J."/>
            <person name="Helton E."/>
            <person name="Ketteman M."/>
            <person name="Madan A."/>
            <person name="Rodrigues S."/>
            <person name="Sanchez A."/>
            <person name="Dasch G."/>
            <person name="Eremeeva M."/>
        </authorList>
    </citation>
    <scope>NUCLEOTIDE SEQUENCE [LARGE SCALE GENOMIC DNA]</scope>
    <source>
        <strain>Sheila Smith</strain>
    </source>
</reference>
<accession>A8GRJ5</accession>
<keyword id="KW-0067">ATP-binding</keyword>
<keyword id="KW-0963">Cytoplasm</keyword>
<keyword id="KW-1015">Disulfide bond</keyword>
<keyword id="KW-0547">Nucleotide-binding</keyword>
<keyword id="KW-0694">RNA-binding</keyword>
<keyword id="KW-0808">Transferase</keyword>
<keyword id="KW-0819">tRNA processing</keyword>
<keyword id="KW-0820">tRNA-binding</keyword>
<evidence type="ECO:0000255" key="1">
    <source>
        <dbReference type="HAMAP-Rule" id="MF_00144"/>
    </source>
</evidence>
<name>MNMA_RICRS</name>
<feature type="chain" id="PRO_1000009567" description="tRNA-specific 2-thiouridylase MnmA">
    <location>
        <begin position="1"/>
        <end position="365"/>
    </location>
</feature>
<feature type="region of interest" description="Interaction with tRNA" evidence="1">
    <location>
        <begin position="154"/>
        <end position="156"/>
    </location>
</feature>
<feature type="active site" description="Nucleophile" evidence="1">
    <location>
        <position position="108"/>
    </location>
</feature>
<feature type="active site" description="Cysteine persulfide intermediate" evidence="1">
    <location>
        <position position="204"/>
    </location>
</feature>
<feature type="binding site" evidence="1">
    <location>
        <begin position="14"/>
        <end position="21"/>
    </location>
    <ligand>
        <name>ATP</name>
        <dbReference type="ChEBI" id="CHEBI:30616"/>
    </ligand>
</feature>
<feature type="binding site" evidence="1">
    <location>
        <position position="40"/>
    </location>
    <ligand>
        <name>ATP</name>
        <dbReference type="ChEBI" id="CHEBI:30616"/>
    </ligand>
</feature>
<feature type="binding site" evidence="1">
    <location>
        <position position="132"/>
    </location>
    <ligand>
        <name>ATP</name>
        <dbReference type="ChEBI" id="CHEBI:30616"/>
    </ligand>
</feature>
<feature type="site" description="Interaction with tRNA" evidence="1">
    <location>
        <position position="133"/>
    </location>
</feature>
<feature type="site" description="Interaction with tRNA" evidence="1">
    <location>
        <position position="344"/>
    </location>
</feature>
<feature type="disulfide bond" description="Alternate" evidence="1">
    <location>
        <begin position="108"/>
        <end position="204"/>
    </location>
</feature>
<dbReference type="EC" id="2.8.1.13" evidence="1"/>
<dbReference type="EMBL" id="CP000848">
    <property type="protein sequence ID" value="ABV76020.1"/>
    <property type="molecule type" value="Genomic_DNA"/>
</dbReference>
<dbReference type="RefSeq" id="WP_012150617.1">
    <property type="nucleotide sequence ID" value="NZ_CP121767.1"/>
</dbReference>
<dbReference type="SMR" id="A8GRJ5"/>
<dbReference type="GeneID" id="79937182"/>
<dbReference type="KEGG" id="rri:A1G_02335"/>
<dbReference type="HOGENOM" id="CLU_035188_0_1_5"/>
<dbReference type="Proteomes" id="UP000006832">
    <property type="component" value="Chromosome"/>
</dbReference>
<dbReference type="GO" id="GO:0005737">
    <property type="term" value="C:cytoplasm"/>
    <property type="evidence" value="ECO:0007669"/>
    <property type="project" value="UniProtKB-SubCell"/>
</dbReference>
<dbReference type="GO" id="GO:0005524">
    <property type="term" value="F:ATP binding"/>
    <property type="evidence" value="ECO:0007669"/>
    <property type="project" value="UniProtKB-KW"/>
</dbReference>
<dbReference type="GO" id="GO:0000049">
    <property type="term" value="F:tRNA binding"/>
    <property type="evidence" value="ECO:0007669"/>
    <property type="project" value="UniProtKB-KW"/>
</dbReference>
<dbReference type="GO" id="GO:0103016">
    <property type="term" value="F:tRNA-uridine 2-sulfurtransferase activity"/>
    <property type="evidence" value="ECO:0007669"/>
    <property type="project" value="UniProtKB-EC"/>
</dbReference>
<dbReference type="GO" id="GO:0002143">
    <property type="term" value="P:tRNA wobble position uridine thiolation"/>
    <property type="evidence" value="ECO:0007669"/>
    <property type="project" value="TreeGrafter"/>
</dbReference>
<dbReference type="CDD" id="cd01998">
    <property type="entry name" value="MnmA_TRMU-like"/>
    <property type="match status" value="1"/>
</dbReference>
<dbReference type="FunFam" id="2.30.30.280:FF:000001">
    <property type="entry name" value="tRNA-specific 2-thiouridylase MnmA"/>
    <property type="match status" value="1"/>
</dbReference>
<dbReference type="FunFam" id="2.40.30.10:FF:000127">
    <property type="entry name" value="tRNA-specific 2-thiouridylase MnmA"/>
    <property type="match status" value="1"/>
</dbReference>
<dbReference type="FunFam" id="3.40.50.620:FF:000115">
    <property type="entry name" value="tRNA-specific 2-thiouridylase MnmA"/>
    <property type="match status" value="1"/>
</dbReference>
<dbReference type="Gene3D" id="2.30.30.280">
    <property type="entry name" value="Adenine nucleotide alpha hydrolases-like domains"/>
    <property type="match status" value="1"/>
</dbReference>
<dbReference type="Gene3D" id="3.40.50.620">
    <property type="entry name" value="HUPs"/>
    <property type="match status" value="1"/>
</dbReference>
<dbReference type="Gene3D" id="2.40.30.10">
    <property type="entry name" value="Translation factors"/>
    <property type="match status" value="1"/>
</dbReference>
<dbReference type="HAMAP" id="MF_00144">
    <property type="entry name" value="tRNA_thiouridyl_MnmA"/>
    <property type="match status" value="1"/>
</dbReference>
<dbReference type="InterPro" id="IPR004506">
    <property type="entry name" value="MnmA-like"/>
</dbReference>
<dbReference type="InterPro" id="IPR046885">
    <property type="entry name" value="MnmA-like_C"/>
</dbReference>
<dbReference type="InterPro" id="IPR046884">
    <property type="entry name" value="MnmA-like_central"/>
</dbReference>
<dbReference type="InterPro" id="IPR023382">
    <property type="entry name" value="MnmA-like_central_sf"/>
</dbReference>
<dbReference type="InterPro" id="IPR014729">
    <property type="entry name" value="Rossmann-like_a/b/a_fold"/>
</dbReference>
<dbReference type="NCBIfam" id="NF001138">
    <property type="entry name" value="PRK00143.1"/>
    <property type="match status" value="1"/>
</dbReference>
<dbReference type="NCBIfam" id="TIGR00420">
    <property type="entry name" value="trmU"/>
    <property type="match status" value="1"/>
</dbReference>
<dbReference type="PANTHER" id="PTHR11933:SF5">
    <property type="entry name" value="MITOCHONDRIAL TRNA-SPECIFIC 2-THIOURIDYLASE 1"/>
    <property type="match status" value="1"/>
</dbReference>
<dbReference type="PANTHER" id="PTHR11933">
    <property type="entry name" value="TRNA 5-METHYLAMINOMETHYL-2-THIOURIDYLATE -METHYLTRANSFERASE"/>
    <property type="match status" value="1"/>
</dbReference>
<dbReference type="Pfam" id="PF03054">
    <property type="entry name" value="tRNA_Me_trans"/>
    <property type="match status" value="1"/>
</dbReference>
<dbReference type="Pfam" id="PF20258">
    <property type="entry name" value="tRNA_Me_trans_C"/>
    <property type="match status" value="1"/>
</dbReference>
<dbReference type="Pfam" id="PF20259">
    <property type="entry name" value="tRNA_Me_trans_M"/>
    <property type="match status" value="1"/>
</dbReference>
<dbReference type="SUPFAM" id="SSF52402">
    <property type="entry name" value="Adenine nucleotide alpha hydrolases-like"/>
    <property type="match status" value="1"/>
</dbReference>
<comment type="function">
    <text evidence="1">Catalyzes the 2-thiolation of uridine at the wobble position (U34) of tRNA, leading to the formation of s(2)U34.</text>
</comment>
<comment type="catalytic activity">
    <reaction evidence="1">
        <text>S-sulfanyl-L-cysteinyl-[protein] + uridine(34) in tRNA + AH2 + ATP = 2-thiouridine(34) in tRNA + L-cysteinyl-[protein] + A + AMP + diphosphate + H(+)</text>
        <dbReference type="Rhea" id="RHEA:47032"/>
        <dbReference type="Rhea" id="RHEA-COMP:10131"/>
        <dbReference type="Rhea" id="RHEA-COMP:11726"/>
        <dbReference type="Rhea" id="RHEA-COMP:11727"/>
        <dbReference type="Rhea" id="RHEA-COMP:11728"/>
        <dbReference type="ChEBI" id="CHEBI:13193"/>
        <dbReference type="ChEBI" id="CHEBI:15378"/>
        <dbReference type="ChEBI" id="CHEBI:17499"/>
        <dbReference type="ChEBI" id="CHEBI:29950"/>
        <dbReference type="ChEBI" id="CHEBI:30616"/>
        <dbReference type="ChEBI" id="CHEBI:33019"/>
        <dbReference type="ChEBI" id="CHEBI:61963"/>
        <dbReference type="ChEBI" id="CHEBI:65315"/>
        <dbReference type="ChEBI" id="CHEBI:87170"/>
        <dbReference type="ChEBI" id="CHEBI:456215"/>
        <dbReference type="EC" id="2.8.1.13"/>
    </reaction>
</comment>
<comment type="subcellular location">
    <subcellularLocation>
        <location evidence="1">Cytoplasm</location>
    </subcellularLocation>
</comment>
<comment type="similarity">
    <text evidence="1">Belongs to the MnmA/TRMU family.</text>
</comment>
<sequence>MINLGAKQSTIVVAMSGGVDSSAVAAMLNEQGHNVIGITLQLYDHGMAVGKKNACCAGQDIYDAKMVANKLGIPHYVLDYESKFKESVIDNFVDSYLQGETPLPCVQCNKSVKFRDLIKTARELGADKLATGHYVRKINGDNGAELHTGLDPAKDQSYFLFTTTKEQLEYLRFPLGGLTKGETRKLASKFGLEVADKPDSQDICFIPDGNYKSVINKIRPNSSESGKIIHVNGFELGEHSGIINYTIGQRRGLGIAYNEPLYVVKIDPKDNIVYVGPESALNVQEFIIRDVNWLADEIKDNEKLEVAVKIRSTRPPRLAEISKLGDDKMKVKFLCKEKAVAPGQACVIYAGARVLGGGWITREIR</sequence>
<protein>
    <recommendedName>
        <fullName evidence="1">tRNA-specific 2-thiouridylase MnmA</fullName>
        <ecNumber evidence="1">2.8.1.13</ecNumber>
    </recommendedName>
</protein>
<proteinExistence type="inferred from homology"/>
<organism>
    <name type="scientific">Rickettsia rickettsii (strain Sheila Smith)</name>
    <dbReference type="NCBI Taxonomy" id="392021"/>
    <lineage>
        <taxon>Bacteria</taxon>
        <taxon>Pseudomonadati</taxon>
        <taxon>Pseudomonadota</taxon>
        <taxon>Alphaproteobacteria</taxon>
        <taxon>Rickettsiales</taxon>
        <taxon>Rickettsiaceae</taxon>
        <taxon>Rickettsieae</taxon>
        <taxon>Rickettsia</taxon>
        <taxon>spotted fever group</taxon>
    </lineage>
</organism>
<gene>
    <name evidence="1" type="primary">mnmA</name>
    <name type="synonym">trmU</name>
    <name type="ordered locus">A1G_02335</name>
</gene>